<protein>
    <recommendedName>
        <fullName evidence="1">Trigger factor</fullName>
        <shortName evidence="1">TF</shortName>
        <ecNumber evidence="1">5.2.1.8</ecNumber>
    </recommendedName>
    <alternativeName>
        <fullName evidence="1">PPIase</fullName>
    </alternativeName>
</protein>
<proteinExistence type="inferred from homology"/>
<dbReference type="EC" id="5.2.1.8" evidence="1"/>
<dbReference type="EMBL" id="CP000260">
    <property type="protein sequence ID" value="ABF34745.1"/>
    <property type="molecule type" value="Genomic_DNA"/>
</dbReference>
<dbReference type="SMR" id="Q1JF14"/>
<dbReference type="KEGG" id="sph:MGAS10270_Spy1680"/>
<dbReference type="HOGENOM" id="CLU_033058_3_2_9"/>
<dbReference type="Proteomes" id="UP000002436">
    <property type="component" value="Chromosome"/>
</dbReference>
<dbReference type="GO" id="GO:0005737">
    <property type="term" value="C:cytoplasm"/>
    <property type="evidence" value="ECO:0007669"/>
    <property type="project" value="UniProtKB-SubCell"/>
</dbReference>
<dbReference type="GO" id="GO:0003755">
    <property type="term" value="F:peptidyl-prolyl cis-trans isomerase activity"/>
    <property type="evidence" value="ECO:0007669"/>
    <property type="project" value="UniProtKB-UniRule"/>
</dbReference>
<dbReference type="GO" id="GO:0044183">
    <property type="term" value="F:protein folding chaperone"/>
    <property type="evidence" value="ECO:0007669"/>
    <property type="project" value="TreeGrafter"/>
</dbReference>
<dbReference type="GO" id="GO:0043022">
    <property type="term" value="F:ribosome binding"/>
    <property type="evidence" value="ECO:0007669"/>
    <property type="project" value="TreeGrafter"/>
</dbReference>
<dbReference type="GO" id="GO:0051083">
    <property type="term" value="P:'de novo' cotranslational protein folding"/>
    <property type="evidence" value="ECO:0007669"/>
    <property type="project" value="TreeGrafter"/>
</dbReference>
<dbReference type="GO" id="GO:0051301">
    <property type="term" value="P:cell division"/>
    <property type="evidence" value="ECO:0007669"/>
    <property type="project" value="UniProtKB-KW"/>
</dbReference>
<dbReference type="GO" id="GO:0061077">
    <property type="term" value="P:chaperone-mediated protein folding"/>
    <property type="evidence" value="ECO:0007669"/>
    <property type="project" value="TreeGrafter"/>
</dbReference>
<dbReference type="GO" id="GO:0015031">
    <property type="term" value="P:protein transport"/>
    <property type="evidence" value="ECO:0007669"/>
    <property type="project" value="UniProtKB-UniRule"/>
</dbReference>
<dbReference type="GO" id="GO:0043335">
    <property type="term" value="P:protein unfolding"/>
    <property type="evidence" value="ECO:0007669"/>
    <property type="project" value="TreeGrafter"/>
</dbReference>
<dbReference type="FunFam" id="3.10.50.40:FF:000001">
    <property type="entry name" value="Trigger factor"/>
    <property type="match status" value="1"/>
</dbReference>
<dbReference type="Gene3D" id="3.10.50.40">
    <property type="match status" value="1"/>
</dbReference>
<dbReference type="Gene3D" id="3.30.70.1050">
    <property type="entry name" value="Trigger factor ribosome-binding domain"/>
    <property type="match status" value="1"/>
</dbReference>
<dbReference type="Gene3D" id="1.10.3120.10">
    <property type="entry name" value="Trigger factor, C-terminal domain"/>
    <property type="match status" value="1"/>
</dbReference>
<dbReference type="HAMAP" id="MF_00303">
    <property type="entry name" value="Trigger_factor_Tig"/>
    <property type="match status" value="1"/>
</dbReference>
<dbReference type="InterPro" id="IPR046357">
    <property type="entry name" value="PPIase_dom_sf"/>
</dbReference>
<dbReference type="InterPro" id="IPR001179">
    <property type="entry name" value="PPIase_FKBP_dom"/>
</dbReference>
<dbReference type="InterPro" id="IPR005215">
    <property type="entry name" value="Trig_fac"/>
</dbReference>
<dbReference type="InterPro" id="IPR008880">
    <property type="entry name" value="Trigger_fac_C"/>
</dbReference>
<dbReference type="InterPro" id="IPR037041">
    <property type="entry name" value="Trigger_fac_C_sf"/>
</dbReference>
<dbReference type="InterPro" id="IPR008881">
    <property type="entry name" value="Trigger_fac_ribosome-bd_bac"/>
</dbReference>
<dbReference type="InterPro" id="IPR036611">
    <property type="entry name" value="Trigger_fac_ribosome-bd_sf"/>
</dbReference>
<dbReference type="InterPro" id="IPR027304">
    <property type="entry name" value="Trigger_fact/SurA_dom_sf"/>
</dbReference>
<dbReference type="NCBIfam" id="TIGR00115">
    <property type="entry name" value="tig"/>
    <property type="match status" value="1"/>
</dbReference>
<dbReference type="PANTHER" id="PTHR30560">
    <property type="entry name" value="TRIGGER FACTOR CHAPERONE AND PEPTIDYL-PROLYL CIS/TRANS ISOMERASE"/>
    <property type="match status" value="1"/>
</dbReference>
<dbReference type="PANTHER" id="PTHR30560:SF3">
    <property type="entry name" value="TRIGGER FACTOR-LIKE PROTEIN TIG, CHLOROPLASTIC"/>
    <property type="match status" value="1"/>
</dbReference>
<dbReference type="Pfam" id="PF00254">
    <property type="entry name" value="FKBP_C"/>
    <property type="match status" value="1"/>
</dbReference>
<dbReference type="Pfam" id="PF05698">
    <property type="entry name" value="Trigger_C"/>
    <property type="match status" value="1"/>
</dbReference>
<dbReference type="Pfam" id="PF05697">
    <property type="entry name" value="Trigger_N"/>
    <property type="match status" value="1"/>
</dbReference>
<dbReference type="PIRSF" id="PIRSF003095">
    <property type="entry name" value="Trigger_factor"/>
    <property type="match status" value="1"/>
</dbReference>
<dbReference type="SUPFAM" id="SSF54534">
    <property type="entry name" value="FKBP-like"/>
    <property type="match status" value="1"/>
</dbReference>
<dbReference type="SUPFAM" id="SSF109998">
    <property type="entry name" value="Triger factor/SurA peptide-binding domain-like"/>
    <property type="match status" value="1"/>
</dbReference>
<dbReference type="SUPFAM" id="SSF102735">
    <property type="entry name" value="Trigger factor ribosome-binding domain"/>
    <property type="match status" value="1"/>
</dbReference>
<dbReference type="PROSITE" id="PS50059">
    <property type="entry name" value="FKBP_PPIASE"/>
    <property type="match status" value="1"/>
</dbReference>
<accession>Q1JF14</accession>
<organism>
    <name type="scientific">Streptococcus pyogenes serotype M2 (strain MGAS10270)</name>
    <dbReference type="NCBI Taxonomy" id="370552"/>
    <lineage>
        <taxon>Bacteria</taxon>
        <taxon>Bacillati</taxon>
        <taxon>Bacillota</taxon>
        <taxon>Bacilli</taxon>
        <taxon>Lactobacillales</taxon>
        <taxon>Streptococcaceae</taxon>
        <taxon>Streptococcus</taxon>
    </lineage>
</organism>
<evidence type="ECO:0000255" key="1">
    <source>
        <dbReference type="HAMAP-Rule" id="MF_00303"/>
    </source>
</evidence>
<name>TIG_STRPD</name>
<comment type="function">
    <text evidence="1">Involved in protein export. Acts as a chaperone by maintaining the newly synthesized protein in an open conformation. Functions as a peptidyl-prolyl cis-trans isomerase.</text>
</comment>
<comment type="catalytic activity">
    <reaction evidence="1">
        <text>[protein]-peptidylproline (omega=180) = [protein]-peptidylproline (omega=0)</text>
        <dbReference type="Rhea" id="RHEA:16237"/>
        <dbReference type="Rhea" id="RHEA-COMP:10747"/>
        <dbReference type="Rhea" id="RHEA-COMP:10748"/>
        <dbReference type="ChEBI" id="CHEBI:83833"/>
        <dbReference type="ChEBI" id="CHEBI:83834"/>
        <dbReference type="EC" id="5.2.1.8"/>
    </reaction>
</comment>
<comment type="subcellular location">
    <subcellularLocation>
        <location>Cytoplasm</location>
    </subcellularLocation>
    <text evidence="1">About half TF is bound to the ribosome near the polypeptide exit tunnel while the other half is free in the cytoplasm.</text>
</comment>
<comment type="domain">
    <text evidence="1">Consists of 3 domains; the N-terminus binds the ribosome, the middle domain has PPIase activity, while the C-terminus has intrinsic chaperone activity on its own.</text>
</comment>
<comment type="similarity">
    <text evidence="1">Belongs to the FKBP-type PPIase family. Tig subfamily.</text>
</comment>
<gene>
    <name evidence="1" type="primary">tig</name>
    <name type="ordered locus">MGAS10270_Spy1680</name>
</gene>
<keyword id="KW-0131">Cell cycle</keyword>
<keyword id="KW-0132">Cell division</keyword>
<keyword id="KW-0143">Chaperone</keyword>
<keyword id="KW-0963">Cytoplasm</keyword>
<keyword id="KW-0413">Isomerase</keyword>
<keyword id="KW-0697">Rotamase</keyword>
<feature type="chain" id="PRO_0000256628" description="Trigger factor">
    <location>
        <begin position="1"/>
        <end position="456"/>
    </location>
</feature>
<feature type="domain" description="PPIase FKBP-type" evidence="1">
    <location>
        <begin position="192"/>
        <end position="277"/>
    </location>
</feature>
<reference key="1">
    <citation type="journal article" date="2006" name="Proc. Natl. Acad. Sci. U.S.A.">
        <title>Molecular genetic anatomy of inter- and intraserotype variation in the human bacterial pathogen group A Streptococcus.</title>
        <authorList>
            <person name="Beres S.B."/>
            <person name="Richter E.W."/>
            <person name="Nagiec M.J."/>
            <person name="Sumby P."/>
            <person name="Porcella S.F."/>
            <person name="DeLeo F.R."/>
            <person name="Musser J.M."/>
        </authorList>
    </citation>
    <scope>NUCLEOTIDE SEQUENCE [LARGE SCALE GENOMIC DNA]</scope>
    <source>
        <strain>MGAS10270</strain>
    </source>
</reference>
<sequence>MISRIKSFKNALNYDKMNCIEIILRRNDLMSTSFENKATNRGVITFTISQDKIKPALDKAFNKIKKDLNAPGFRKGHMPRPVFNQKFGEEVLYEDALNIVLPEAYEAAVTELGLDVVAQPKIDVVSMEKGKEWTLSAEVVTKPEVKLGDYKNLVVEVDASKEVSDEDVDAKIERERQNLAELIIKDGEAAQGDTVVIDFVGSVDGVEFDGGKGDNFSLELGSGQFIPGFEDQLVGAKAGDEVEVNVTFPESYQAEDLAGKAAKFMTTIHEVKTKEVPELDDELAKDIDEDVDTLEDLKVKYRKELEAAQETAYDDAVEGAAIELAVANAEIVDLPEEMIHEEVNRSVNEFMGNMQRQGISPEMYFQLTGTTQEDLHNQYSAEADKRVKTNLVIEAIAKAEGFEATDSEIEQEINDLATEYNMPADQVRSLLSADMLKHDIVMKKAVEVITSTASVK</sequence>